<reference key="1">
    <citation type="journal article" date="2005" name="Proc. Natl. Acad. Sci. U.S.A.">
        <title>The complete genome sequence of Mycobacterium avium subspecies paratuberculosis.</title>
        <authorList>
            <person name="Li L."/>
            <person name="Bannantine J.P."/>
            <person name="Zhang Q."/>
            <person name="Amonsin A."/>
            <person name="May B.J."/>
            <person name="Alt D."/>
            <person name="Banerji N."/>
            <person name="Kanjilal S."/>
            <person name="Kapur V."/>
        </authorList>
    </citation>
    <scope>NUCLEOTIDE SEQUENCE [LARGE SCALE GENOMIC DNA]</scope>
    <source>
        <strain>ATCC BAA-968 / K-10</strain>
    </source>
</reference>
<comment type="similarity">
    <text evidence="1">Belongs to the UPF0336 family.</text>
</comment>
<protein>
    <recommendedName>
        <fullName evidence="1">UPF0336 protein MAP_4107</fullName>
    </recommendedName>
</protein>
<name>Y4107_MYCPA</name>
<organism>
    <name type="scientific">Mycolicibacterium paratuberculosis (strain ATCC BAA-968 / K-10)</name>
    <name type="common">Mycobacterium paratuberculosis</name>
    <dbReference type="NCBI Taxonomy" id="262316"/>
    <lineage>
        <taxon>Bacteria</taxon>
        <taxon>Bacillati</taxon>
        <taxon>Actinomycetota</taxon>
        <taxon>Actinomycetes</taxon>
        <taxon>Mycobacteriales</taxon>
        <taxon>Mycobacteriaceae</taxon>
        <taxon>Mycobacterium</taxon>
        <taxon>Mycobacterium avium complex (MAC)</taxon>
    </lineage>
</organism>
<dbReference type="EMBL" id="AE016958">
    <property type="protein sequence ID" value="AAS06657.1"/>
    <property type="molecule type" value="Genomic_DNA"/>
</dbReference>
<dbReference type="SMR" id="Q73SG7"/>
<dbReference type="STRING" id="262316.MAP_4107"/>
<dbReference type="KEGG" id="mpa:MAP_4107"/>
<dbReference type="eggNOG" id="COG2030">
    <property type="taxonomic scope" value="Bacteria"/>
</dbReference>
<dbReference type="HOGENOM" id="CLU_116276_0_1_11"/>
<dbReference type="Proteomes" id="UP000000580">
    <property type="component" value="Chromosome"/>
</dbReference>
<dbReference type="GO" id="GO:0019171">
    <property type="term" value="F:(3R)-hydroxyacyl-[acyl-carrier-protein] dehydratase activity"/>
    <property type="evidence" value="ECO:0007669"/>
    <property type="project" value="TreeGrafter"/>
</dbReference>
<dbReference type="GO" id="GO:0006633">
    <property type="term" value="P:fatty acid biosynthetic process"/>
    <property type="evidence" value="ECO:0007669"/>
    <property type="project" value="TreeGrafter"/>
</dbReference>
<dbReference type="CDD" id="cd03441">
    <property type="entry name" value="R_hydratase_like"/>
    <property type="match status" value="1"/>
</dbReference>
<dbReference type="Gene3D" id="3.10.129.10">
    <property type="entry name" value="Hotdog Thioesterase"/>
    <property type="match status" value="1"/>
</dbReference>
<dbReference type="HAMAP" id="MF_00799">
    <property type="entry name" value="UPF0336"/>
    <property type="match status" value="1"/>
</dbReference>
<dbReference type="InterPro" id="IPR039569">
    <property type="entry name" value="FAS1-like_DH_region"/>
</dbReference>
<dbReference type="InterPro" id="IPR016709">
    <property type="entry name" value="HadA-like"/>
</dbReference>
<dbReference type="InterPro" id="IPR029069">
    <property type="entry name" value="HotDog_dom_sf"/>
</dbReference>
<dbReference type="InterPro" id="IPR050965">
    <property type="entry name" value="UPF0336/Enoyl-CoA_hydratase"/>
</dbReference>
<dbReference type="InterPro" id="IPR054849">
    <property type="entry name" value="UPF0336_fam"/>
</dbReference>
<dbReference type="NCBIfam" id="NF040624">
    <property type="entry name" value="HadA"/>
    <property type="match status" value="1"/>
</dbReference>
<dbReference type="NCBIfam" id="NF010245">
    <property type="entry name" value="PRK13692.1"/>
    <property type="match status" value="1"/>
</dbReference>
<dbReference type="PANTHER" id="PTHR43437:SF3">
    <property type="entry name" value="HYDROXYACYL-THIOESTER DEHYDRATASE TYPE 2, MITOCHONDRIAL"/>
    <property type="match status" value="1"/>
</dbReference>
<dbReference type="PANTHER" id="PTHR43437">
    <property type="entry name" value="HYDROXYACYL-THIOESTER DEHYDRATASE TYPE 2, MITOCHONDRIAL-RELATED"/>
    <property type="match status" value="1"/>
</dbReference>
<dbReference type="Pfam" id="PF13452">
    <property type="entry name" value="FAS1_DH_region"/>
    <property type="match status" value="1"/>
</dbReference>
<dbReference type="PIRSF" id="PIRSF018072">
    <property type="entry name" value="UCP018072"/>
    <property type="match status" value="1"/>
</dbReference>
<dbReference type="SUPFAM" id="SSF54637">
    <property type="entry name" value="Thioesterase/thiol ester dehydrase-isomerase"/>
    <property type="match status" value="1"/>
</dbReference>
<sequence>MPLTTNLVGMHYRYPDHYEVEREKIREYAVAVQNDDAWYFEEKAASELGYKGLLAPLTFVCVFGYMAQSSFFKHANIAVKDAQIVQVDQVLKFYAPLVAGDKLYCDVYVDSVRVSHGTQIIVTKNVITNEAGDVVQETYTTLAGRAGEDGEEGFTDATA</sequence>
<proteinExistence type="inferred from homology"/>
<gene>
    <name type="ordered locus">MAP_4107</name>
</gene>
<keyword id="KW-1185">Reference proteome</keyword>
<feature type="chain" id="PRO_0000216140" description="UPF0336 protein MAP_4107">
    <location>
        <begin position="1"/>
        <end position="159"/>
    </location>
</feature>
<evidence type="ECO:0000255" key="1">
    <source>
        <dbReference type="HAMAP-Rule" id="MF_00799"/>
    </source>
</evidence>
<accession>Q73SG7</accession>